<organism>
    <name type="scientific">Pleurastrum terricola</name>
    <name type="common">Filamentous green alga</name>
    <name type="synonym">Leptosira terrestris</name>
    <dbReference type="NCBI Taxonomy" id="34116"/>
    <lineage>
        <taxon>Eukaryota</taxon>
        <taxon>Viridiplantae</taxon>
        <taxon>Chlorophyta</taxon>
        <taxon>core chlorophytes</taxon>
        <taxon>Chlorophyceae</taxon>
        <taxon>CS clade</taxon>
        <taxon>Chlamydomonadales</taxon>
        <taxon>Pleurastraceae</taxon>
        <taxon>Pleurastrum</taxon>
    </lineage>
</organism>
<keyword id="KW-0007">Acetylation</keyword>
<keyword id="KW-0106">Calcium</keyword>
<keyword id="KW-0148">Chlorophyll</keyword>
<keyword id="KW-0150">Chloroplast</keyword>
<keyword id="KW-0157">Chromophore</keyword>
<keyword id="KW-0249">Electron transport</keyword>
<keyword id="KW-0359">Herbicide resistance</keyword>
<keyword id="KW-0408">Iron</keyword>
<keyword id="KW-0460">Magnesium</keyword>
<keyword id="KW-0464">Manganese</keyword>
<keyword id="KW-0472">Membrane</keyword>
<keyword id="KW-0479">Metal-binding</keyword>
<keyword id="KW-0560">Oxidoreductase</keyword>
<keyword id="KW-0597">Phosphoprotein</keyword>
<keyword id="KW-0602">Photosynthesis</keyword>
<keyword id="KW-0604">Photosystem II</keyword>
<keyword id="KW-0934">Plastid</keyword>
<keyword id="KW-0793">Thylakoid</keyword>
<keyword id="KW-0812">Transmembrane</keyword>
<keyword id="KW-1133">Transmembrane helix</keyword>
<keyword id="KW-0813">Transport</keyword>
<reference key="1">
    <citation type="journal article" date="2007" name="BMC Genomics">
        <title>The chloroplast genome sequence of the green alga Leptosira terrestris: multiple losses of the inverted repeat and extensive genome rearrangements within the Trebouxiophyceae.</title>
        <authorList>
            <person name="de Cambiaire J.-C."/>
            <person name="Otis C."/>
            <person name="Turmel M."/>
            <person name="Lemieux C."/>
        </authorList>
    </citation>
    <scope>NUCLEOTIDE SEQUENCE [LARGE SCALE GENOMIC DNA]</scope>
    <source>
        <strain>CCAP 463/2 / UTEX 333</strain>
    </source>
</reference>
<proteinExistence type="inferred from homology"/>
<feature type="initiator methionine" description="Removed" evidence="1">
    <location>
        <position position="1"/>
    </location>
</feature>
<feature type="chain" id="PRO_0000340011" description="Photosystem II protein D1" evidence="1">
    <location>
        <begin position="2"/>
        <end position="344"/>
    </location>
</feature>
<feature type="transmembrane region" description="Helical" evidence="1">
    <location>
        <begin position="29"/>
        <end position="46"/>
    </location>
</feature>
<feature type="transmembrane region" description="Helical" evidence="1">
    <location>
        <begin position="118"/>
        <end position="133"/>
    </location>
</feature>
<feature type="transmembrane region" description="Helical" evidence="1">
    <location>
        <begin position="142"/>
        <end position="156"/>
    </location>
</feature>
<feature type="transmembrane region" description="Helical" evidence="1">
    <location>
        <begin position="197"/>
        <end position="218"/>
    </location>
</feature>
<feature type="transmembrane region" description="Helical" evidence="1">
    <location>
        <begin position="274"/>
        <end position="288"/>
    </location>
</feature>
<feature type="binding site" description="axial binding residue" evidence="1">
    <location>
        <position position="118"/>
    </location>
    <ligand>
        <name>chlorophyll a</name>
        <dbReference type="ChEBI" id="CHEBI:58416"/>
        <label>ChlzD1</label>
    </ligand>
    <ligandPart>
        <name>Mg</name>
        <dbReference type="ChEBI" id="CHEBI:25107"/>
    </ligandPart>
</feature>
<feature type="binding site" evidence="1">
    <location>
        <position position="126"/>
    </location>
    <ligand>
        <name>pheophytin a</name>
        <dbReference type="ChEBI" id="CHEBI:136840"/>
        <label>D1</label>
    </ligand>
</feature>
<feature type="binding site" evidence="1">
    <location>
        <position position="170"/>
    </location>
    <ligand>
        <name>[CaMn4O5] cluster</name>
        <dbReference type="ChEBI" id="CHEBI:189552"/>
    </ligand>
</feature>
<feature type="binding site" evidence="1">
    <location>
        <position position="189"/>
    </location>
    <ligand>
        <name>[CaMn4O5] cluster</name>
        <dbReference type="ChEBI" id="CHEBI:189552"/>
    </ligand>
</feature>
<feature type="binding site" description="axial binding residue" evidence="1">
    <location>
        <position position="198"/>
    </location>
    <ligand>
        <name>chlorophyll a</name>
        <dbReference type="ChEBI" id="CHEBI:58416"/>
        <label>PD1</label>
    </ligand>
    <ligandPart>
        <name>Mg</name>
        <dbReference type="ChEBI" id="CHEBI:25107"/>
    </ligandPart>
</feature>
<feature type="binding site" evidence="1">
    <location>
        <position position="215"/>
    </location>
    <ligand>
        <name>a quinone</name>
        <dbReference type="ChEBI" id="CHEBI:132124"/>
        <label>B</label>
    </ligand>
</feature>
<feature type="binding site" evidence="1">
    <location>
        <position position="215"/>
    </location>
    <ligand>
        <name>Fe cation</name>
        <dbReference type="ChEBI" id="CHEBI:24875"/>
        <note>ligand shared with heterodimeric partner</note>
    </ligand>
</feature>
<feature type="binding site" evidence="1">
    <location>
        <begin position="264"/>
        <end position="265"/>
    </location>
    <ligand>
        <name>a quinone</name>
        <dbReference type="ChEBI" id="CHEBI:132124"/>
        <label>B</label>
    </ligand>
</feature>
<feature type="binding site" evidence="1">
    <location>
        <position position="272"/>
    </location>
    <ligand>
        <name>Fe cation</name>
        <dbReference type="ChEBI" id="CHEBI:24875"/>
        <note>ligand shared with heterodimeric partner</note>
    </ligand>
</feature>
<feature type="binding site" evidence="1">
    <location>
        <position position="332"/>
    </location>
    <ligand>
        <name>[CaMn4O5] cluster</name>
        <dbReference type="ChEBI" id="CHEBI:189552"/>
    </ligand>
</feature>
<feature type="binding site" evidence="1">
    <location>
        <position position="333"/>
    </location>
    <ligand>
        <name>[CaMn4O5] cluster</name>
        <dbReference type="ChEBI" id="CHEBI:189552"/>
    </ligand>
</feature>
<feature type="binding site" evidence="1">
    <location>
        <position position="342"/>
    </location>
    <ligand>
        <name>[CaMn4O5] cluster</name>
        <dbReference type="ChEBI" id="CHEBI:189552"/>
    </ligand>
</feature>
<feature type="binding site" evidence="1">
    <location>
        <position position="344"/>
    </location>
    <ligand>
        <name>[CaMn4O5] cluster</name>
        <dbReference type="ChEBI" id="CHEBI:189552"/>
    </ligand>
</feature>
<feature type="site" description="Tyrosine radical intermediate" evidence="1">
    <location>
        <position position="161"/>
    </location>
</feature>
<feature type="site" description="Stabilizes free radical intermediate" evidence="1">
    <location>
        <position position="190"/>
    </location>
</feature>
<feature type="modified residue" description="N-acetylthreonine" evidence="1">
    <location>
        <position position="2"/>
    </location>
</feature>
<feature type="modified residue" description="Phosphothreonine" evidence="1">
    <location>
        <position position="2"/>
    </location>
</feature>
<name>PSBA_PLETE</name>
<dbReference type="EC" id="1.10.3.9" evidence="1"/>
<dbReference type="EMBL" id="EF506945">
    <property type="protein sequence ID" value="ABO69332.1"/>
    <property type="status" value="ALT_INIT"/>
    <property type="molecule type" value="Genomic_DNA"/>
</dbReference>
<dbReference type="RefSeq" id="YP_001382195.2">
    <property type="nucleotide sequence ID" value="NC_009681.1"/>
</dbReference>
<dbReference type="SMR" id="A6YGB8"/>
<dbReference type="GeneID" id="5383800"/>
<dbReference type="GO" id="GO:0009535">
    <property type="term" value="C:chloroplast thylakoid membrane"/>
    <property type="evidence" value="ECO:0007669"/>
    <property type="project" value="UniProtKB-SubCell"/>
</dbReference>
<dbReference type="GO" id="GO:0009523">
    <property type="term" value="C:photosystem II"/>
    <property type="evidence" value="ECO:0007669"/>
    <property type="project" value="UniProtKB-KW"/>
</dbReference>
<dbReference type="GO" id="GO:0016168">
    <property type="term" value="F:chlorophyll binding"/>
    <property type="evidence" value="ECO:0007669"/>
    <property type="project" value="UniProtKB-UniRule"/>
</dbReference>
<dbReference type="GO" id="GO:0045156">
    <property type="term" value="F:electron transporter, transferring electrons within the cyclic electron transport pathway of photosynthesis activity"/>
    <property type="evidence" value="ECO:0007669"/>
    <property type="project" value="InterPro"/>
</dbReference>
<dbReference type="GO" id="GO:0005506">
    <property type="term" value="F:iron ion binding"/>
    <property type="evidence" value="ECO:0007669"/>
    <property type="project" value="UniProtKB-UniRule"/>
</dbReference>
<dbReference type="GO" id="GO:0016682">
    <property type="term" value="F:oxidoreductase activity, acting on diphenols and related substances as donors, oxygen as acceptor"/>
    <property type="evidence" value="ECO:0007669"/>
    <property type="project" value="UniProtKB-UniRule"/>
</dbReference>
<dbReference type="GO" id="GO:0010242">
    <property type="term" value="F:oxygen evolving activity"/>
    <property type="evidence" value="ECO:0007669"/>
    <property type="project" value="UniProtKB-EC"/>
</dbReference>
<dbReference type="GO" id="GO:0009772">
    <property type="term" value="P:photosynthetic electron transport in photosystem II"/>
    <property type="evidence" value="ECO:0007669"/>
    <property type="project" value="InterPro"/>
</dbReference>
<dbReference type="GO" id="GO:0009635">
    <property type="term" value="P:response to herbicide"/>
    <property type="evidence" value="ECO:0007669"/>
    <property type="project" value="UniProtKB-KW"/>
</dbReference>
<dbReference type="CDD" id="cd09289">
    <property type="entry name" value="Photosystem-II_D1"/>
    <property type="match status" value="1"/>
</dbReference>
<dbReference type="FunFam" id="1.20.85.10:FF:000002">
    <property type="entry name" value="Photosystem II protein D1"/>
    <property type="match status" value="1"/>
</dbReference>
<dbReference type="Gene3D" id="1.20.85.10">
    <property type="entry name" value="Photosystem II protein D1-like"/>
    <property type="match status" value="1"/>
</dbReference>
<dbReference type="HAMAP" id="MF_01379">
    <property type="entry name" value="PSII_PsbA_D1"/>
    <property type="match status" value="1"/>
</dbReference>
<dbReference type="InterPro" id="IPR055266">
    <property type="entry name" value="D1/D2"/>
</dbReference>
<dbReference type="InterPro" id="IPR036854">
    <property type="entry name" value="Photo_II_D1/D2_sf"/>
</dbReference>
<dbReference type="InterPro" id="IPR000484">
    <property type="entry name" value="Photo_RC_L/M"/>
</dbReference>
<dbReference type="InterPro" id="IPR055265">
    <property type="entry name" value="Photo_RC_L/M_CS"/>
</dbReference>
<dbReference type="InterPro" id="IPR005867">
    <property type="entry name" value="PSII_D1"/>
</dbReference>
<dbReference type="NCBIfam" id="TIGR01151">
    <property type="entry name" value="psbA"/>
    <property type="match status" value="1"/>
</dbReference>
<dbReference type="PANTHER" id="PTHR33149:SF12">
    <property type="entry name" value="PHOTOSYSTEM II D2 PROTEIN"/>
    <property type="match status" value="1"/>
</dbReference>
<dbReference type="PANTHER" id="PTHR33149">
    <property type="entry name" value="PHOTOSYSTEM II PROTEIN D1"/>
    <property type="match status" value="1"/>
</dbReference>
<dbReference type="Pfam" id="PF00124">
    <property type="entry name" value="Photo_RC"/>
    <property type="match status" value="1"/>
</dbReference>
<dbReference type="PRINTS" id="PR00256">
    <property type="entry name" value="REACTNCENTRE"/>
</dbReference>
<dbReference type="SUPFAM" id="SSF81483">
    <property type="entry name" value="Bacterial photosystem II reaction centre, L and M subunits"/>
    <property type="match status" value="1"/>
</dbReference>
<dbReference type="PROSITE" id="PS00244">
    <property type="entry name" value="REACTION_CENTER"/>
    <property type="match status" value="1"/>
</dbReference>
<geneLocation type="chloroplast"/>
<sequence>MTAILERRETTSLWARFCEWVTSTENRLYIGWFGCLMIPTLLTATSVFIIAFIAAPPVDIDGIREPVSGSLLYGNNIISGAVVPTSNAIGLHFYPIWEAASLDEWLYNGGPYQLIVCHFFLGICAYMGREWELSFRLGMRPWIAVAYSAPVAAATAVFIIYPIGQGSFSDGMPLGISGTFNFMIVFQAEHNILMHPFHMLGVAGVFGGSLFSAMHGSLVTSSLIRETTENQSANAGYRFGQEEETYNIVAAHGYFGRLIFQYASFNNSRSLHFFLAAWPVIGIWFTALGISTMAFNLNGFNFNQSVLDSQGRVLNTWADIINRANLGMEVMHERNAHNFPLDLA</sequence>
<evidence type="ECO:0000255" key="1">
    <source>
        <dbReference type="HAMAP-Rule" id="MF_01379"/>
    </source>
</evidence>
<evidence type="ECO:0000305" key="2"/>
<gene>
    <name evidence="1" type="primary">psbA</name>
</gene>
<comment type="function">
    <text evidence="1">Photosystem II (PSII) is a light-driven water:plastoquinone oxidoreductase that uses light energy to abstract electrons from H(2)O, generating O(2) and a proton gradient subsequently used for ATP formation. It consists of a core antenna complex that captures photons, and an electron transfer chain that converts photonic excitation into a charge separation. The D1/D2 (PsbA/PsbD) reaction center heterodimer binds P680, the primary electron donor of PSII as well as several subsequent electron acceptors.</text>
</comment>
<comment type="catalytic activity">
    <reaction evidence="1">
        <text>2 a plastoquinone + 4 hnu + 2 H2O = 2 a plastoquinol + O2</text>
        <dbReference type="Rhea" id="RHEA:36359"/>
        <dbReference type="Rhea" id="RHEA-COMP:9561"/>
        <dbReference type="Rhea" id="RHEA-COMP:9562"/>
        <dbReference type="ChEBI" id="CHEBI:15377"/>
        <dbReference type="ChEBI" id="CHEBI:15379"/>
        <dbReference type="ChEBI" id="CHEBI:17757"/>
        <dbReference type="ChEBI" id="CHEBI:30212"/>
        <dbReference type="ChEBI" id="CHEBI:62192"/>
        <dbReference type="EC" id="1.10.3.9"/>
    </reaction>
</comment>
<comment type="cofactor">
    <text evidence="1">The D1/D2 heterodimer binds P680, chlorophylls that are the primary electron donor of PSII, and subsequent electron acceptors. It shares a non-heme iron and each subunit binds pheophytin, quinone, additional chlorophylls, carotenoids and lipids. D1 provides most of the ligands for the Mn4-Ca-O5 cluster of the oxygen-evolving complex (OEC). There is also a Cl(-1) ion associated with D1 and D2, which is required for oxygen evolution. The PSII complex binds additional chlorophylls, carotenoids and specific lipids.</text>
</comment>
<comment type="subunit">
    <text evidence="1">PSII is composed of 1 copy each of membrane proteins PsbA, PsbB, PsbC, PsbD, PsbE, PsbF, PsbH, PsbI, PsbJ, PsbK, PsbL, PsbM, PsbT, PsbX, PsbY, PsbZ, Psb30/Ycf12, at least 3 peripheral proteins of the oxygen-evolving complex and a large number of cofactors. It forms dimeric complexes.</text>
</comment>
<comment type="subcellular location">
    <subcellularLocation>
        <location evidence="1">Plastid</location>
        <location evidence="1">Chloroplast thylakoid membrane</location>
        <topology evidence="1">Multi-pass membrane protein</topology>
    </subcellularLocation>
</comment>
<comment type="PTM">
    <text evidence="1">Tyr-161 forms a radical intermediate that is referred to as redox-active TyrZ, YZ or Y-Z.</text>
</comment>
<comment type="miscellaneous">
    <text evidence="1">2 of the reaction center chlorophylls (ChlD1 and ChlD2) are entirely coordinated by water.</text>
</comment>
<comment type="miscellaneous">
    <text evidence="1">Herbicides such as atrazine, BNT, diuron or ioxynil bind in the Q(B) binding site and block subsequent electron transfer.</text>
</comment>
<comment type="similarity">
    <text evidence="1">Belongs to the reaction center PufL/M/PsbA/D family.</text>
</comment>
<comment type="sequence caution" evidence="2">
    <conflict type="erroneous initiation">
        <sequence resource="EMBL-CDS" id="ABO69332"/>
    </conflict>
    <text>Extended N-terminus.</text>
</comment>
<accession>A6YGB8</accession>
<protein>
    <recommendedName>
        <fullName evidence="1">Photosystem II protein D1</fullName>
        <shortName evidence="1">PSII D1 protein</shortName>
        <ecNumber evidence="1">1.10.3.9</ecNumber>
    </recommendedName>
    <alternativeName>
        <fullName evidence="1">Photosystem II Q(B) protein</fullName>
    </alternativeName>
</protein>